<feature type="chain" id="PRO_0000193687" description="Chitin synthase 2">
    <location>
        <begin position="1"/>
        <end position="1009"/>
    </location>
</feature>
<feature type="transmembrane region" description="Helical" evidence="1">
    <location>
        <begin position="647"/>
        <end position="667"/>
    </location>
</feature>
<feature type="transmembrane region" description="Helical" evidence="1">
    <location>
        <begin position="682"/>
        <end position="702"/>
    </location>
</feature>
<feature type="transmembrane region" description="Helical" evidence="1">
    <location>
        <begin position="722"/>
        <end position="742"/>
    </location>
</feature>
<feature type="transmembrane region" description="Helical" evidence="1">
    <location>
        <begin position="757"/>
        <end position="777"/>
    </location>
</feature>
<feature type="transmembrane region" description="Helical" evidence="1">
    <location>
        <begin position="804"/>
        <end position="823"/>
    </location>
</feature>
<feature type="transmembrane region" description="Helical" evidence="1">
    <location>
        <begin position="930"/>
        <end position="950"/>
    </location>
</feature>
<feature type="transmembrane region" description="Helical" evidence="1">
    <location>
        <begin position="967"/>
        <end position="987"/>
    </location>
</feature>
<feature type="region of interest" description="Disordered" evidence="2">
    <location>
        <begin position="1"/>
        <end position="62"/>
    </location>
</feature>
<feature type="region of interest" description="Disordered" evidence="2">
    <location>
        <begin position="175"/>
        <end position="234"/>
    </location>
</feature>
<feature type="compositionally biased region" description="Polar residues" evidence="2">
    <location>
        <begin position="1"/>
        <end position="12"/>
    </location>
</feature>
<feature type="compositionally biased region" description="Polar residues" evidence="2">
    <location>
        <begin position="34"/>
        <end position="62"/>
    </location>
</feature>
<feature type="compositionally biased region" description="Acidic residues" evidence="2">
    <location>
        <begin position="192"/>
        <end position="202"/>
    </location>
</feature>
<feature type="helix" evidence="4">
    <location>
        <begin position="143"/>
        <end position="145"/>
    </location>
</feature>
<feature type="helix" evidence="4">
    <location>
        <begin position="146"/>
        <end position="154"/>
    </location>
</feature>
<feature type="helix" evidence="4">
    <location>
        <begin position="243"/>
        <end position="245"/>
    </location>
</feature>
<feature type="strand" evidence="4">
    <location>
        <begin position="248"/>
        <end position="252"/>
    </location>
</feature>
<feature type="helix" evidence="4">
    <location>
        <begin position="255"/>
        <end position="260"/>
    </location>
</feature>
<feature type="strand" evidence="4">
    <location>
        <begin position="266"/>
        <end position="270"/>
    </location>
</feature>
<feature type="helix" evidence="4">
    <location>
        <begin position="275"/>
        <end position="278"/>
    </location>
</feature>
<feature type="strand" evidence="4">
    <location>
        <begin position="279"/>
        <end position="285"/>
    </location>
</feature>
<feature type="turn" evidence="4">
    <location>
        <begin position="289"/>
        <end position="296"/>
    </location>
</feature>
<feature type="helix" evidence="4">
    <location>
        <begin position="300"/>
        <end position="303"/>
    </location>
</feature>
<feature type="strand" evidence="4">
    <location>
        <begin position="304"/>
        <end position="306"/>
    </location>
</feature>
<feature type="strand" evidence="4">
    <location>
        <begin position="311"/>
        <end position="320"/>
    </location>
</feature>
<feature type="helix" evidence="4">
    <location>
        <begin position="323"/>
        <end position="342"/>
    </location>
</feature>
<feature type="strand" evidence="4">
    <location>
        <begin position="347"/>
        <end position="350"/>
    </location>
</feature>
<feature type="helix" evidence="4">
    <location>
        <begin position="353"/>
        <end position="356"/>
    </location>
</feature>
<feature type="strand" evidence="4">
    <location>
        <begin position="357"/>
        <end position="364"/>
    </location>
</feature>
<feature type="turn" evidence="4">
    <location>
        <begin position="366"/>
        <end position="368"/>
    </location>
</feature>
<feature type="helix" evidence="4">
    <location>
        <begin position="371"/>
        <end position="380"/>
    </location>
</feature>
<feature type="turn" evidence="4">
    <location>
        <begin position="385"/>
        <end position="387"/>
    </location>
</feature>
<feature type="strand" evidence="4">
    <location>
        <begin position="390"/>
        <end position="392"/>
    </location>
</feature>
<feature type="strand" evidence="4">
    <location>
        <begin position="399"/>
        <end position="406"/>
    </location>
</feature>
<feature type="strand" evidence="4">
    <location>
        <begin position="409"/>
        <end position="413"/>
    </location>
</feature>
<feature type="strand" evidence="4">
    <location>
        <begin position="418"/>
        <end position="421"/>
    </location>
</feature>
<feature type="strand" evidence="4">
    <location>
        <begin position="428"/>
        <end position="437"/>
    </location>
</feature>
<feature type="helix" evidence="4">
    <location>
        <begin position="440"/>
        <end position="450"/>
    </location>
</feature>
<feature type="helix" evidence="4">
    <location>
        <begin position="452"/>
        <end position="456"/>
    </location>
</feature>
<feature type="strand" evidence="4">
    <location>
        <begin position="459"/>
        <end position="465"/>
    </location>
</feature>
<feature type="helix" evidence="4">
    <location>
        <begin position="474"/>
        <end position="484"/>
    </location>
</feature>
<feature type="strand" evidence="4">
    <location>
        <begin position="488"/>
        <end position="497"/>
    </location>
</feature>
<feature type="turn" evidence="4">
    <location>
        <begin position="504"/>
        <end position="506"/>
    </location>
</feature>
<feature type="helix" evidence="4">
    <location>
        <begin position="508"/>
        <end position="531"/>
    </location>
</feature>
<feature type="strand" evidence="4">
    <location>
        <begin position="539"/>
        <end position="544"/>
    </location>
</feature>
<feature type="helix" evidence="4">
    <location>
        <begin position="546"/>
        <end position="549"/>
    </location>
</feature>
<feature type="helix" evidence="4">
    <location>
        <begin position="558"/>
        <end position="568"/>
    </location>
</feature>
<feature type="helix" evidence="4">
    <location>
        <begin position="581"/>
        <end position="589"/>
    </location>
</feature>
<feature type="helix" evidence="4">
    <location>
        <begin position="594"/>
        <end position="597"/>
    </location>
</feature>
<feature type="helix" evidence="4">
    <location>
        <begin position="599"/>
        <end position="601"/>
    </location>
</feature>
<feature type="helix" evidence="4">
    <location>
        <begin position="604"/>
        <end position="612"/>
    </location>
</feature>
<feature type="strand" evidence="4">
    <location>
        <begin position="620"/>
        <end position="631"/>
    </location>
</feature>
<feature type="helix" evidence="4">
    <location>
        <begin position="637"/>
        <end position="660"/>
    </location>
</feature>
<feature type="helix" evidence="4">
    <location>
        <begin position="662"/>
        <end position="666"/>
    </location>
</feature>
<feature type="helix" evidence="4">
    <location>
        <begin position="672"/>
        <end position="693"/>
    </location>
</feature>
<feature type="helix" evidence="4">
    <location>
        <begin position="695"/>
        <end position="709"/>
    </location>
</feature>
<feature type="helix" evidence="4">
    <location>
        <begin position="720"/>
        <end position="744"/>
    </location>
</feature>
<feature type="turn" evidence="4">
    <location>
        <begin position="747"/>
        <end position="750"/>
    </location>
</feature>
<feature type="helix" evidence="4">
    <location>
        <begin position="751"/>
        <end position="786"/>
    </location>
</feature>
<feature type="helix" evidence="4">
    <location>
        <begin position="792"/>
        <end position="797"/>
    </location>
</feature>
<feature type="helix" evidence="4">
    <location>
        <begin position="799"/>
        <end position="821"/>
    </location>
</feature>
<feature type="helix" evidence="4">
    <location>
        <begin position="827"/>
        <end position="830"/>
    </location>
</feature>
<feature type="helix" evidence="4">
    <location>
        <begin position="832"/>
        <end position="852"/>
    </location>
</feature>
<feature type="strand" evidence="4">
    <location>
        <begin position="872"/>
        <end position="875"/>
    </location>
</feature>
<feature type="strand" evidence="4">
    <location>
        <begin position="877"/>
        <end position="879"/>
    </location>
</feature>
<feature type="helix" evidence="4">
    <location>
        <begin position="889"/>
        <end position="904"/>
    </location>
</feature>
<feature type="helix" evidence="4">
    <location>
        <begin position="918"/>
        <end position="945"/>
    </location>
</feature>
<feature type="helix" evidence="4">
    <location>
        <begin position="949"/>
        <end position="953"/>
    </location>
</feature>
<feature type="helix" evidence="4">
    <location>
        <begin position="958"/>
        <end position="1001"/>
    </location>
</feature>
<name>CHS2_CANAX</name>
<proteinExistence type="evidence at protein level"/>
<sequence length="1009" mass="115586">MSYNNPNNSNSHLRPHAYNNSRRDDSDGDESSIEFLNQRSNTPLTQGTYNYHNTSTNSLNFQQPEPIYRNQTRTSLSDSYYDHPIFDTSQTQIQPPHDNPFTESYEMTDTSYQGNDHHYRTGQPNHLMNPTYNQAFIPHVYDEEDNDEQEYDQRIQYNQFQGDHFDLAAISYADDESQSQLDYVPTERVIPEGEEEEEEGETSFEKEPGSETISGPFGEERSFEEPPPQQEVRSKKLTRATGLNGHLVLDCPVADELLSKFPDYNPAEKSGGLSREFAFMRYTAVTCGPSNFYRDAYILRPVHYPIPRQTELMIVITMYNEDDILLGRTLKGVFKNIKYLESKARSSTWGKDSWKKIVVCIVSDGRTKINERAQALLAGLGVYQEGLAKSRVDDKKVQAHMFEYTTRVGISKVTDDVVKLTTEKVVPVQMLFCLKETNAKKINSHRWCFQAIGQVLDPKIVVLLDCGTQPSGRSLYELWKEFDRDHRVAGACGEITTSLKKRQMITNPLVYGQNFEYKISNILDKPTESSFGFISVLPGAFSAYRFIALQNDINGIGPLEKYFKGEFLHSSGELDPNDDEFQMKHLMLKEEAGIFTSNMYLAEDRILCFELVAKRGCNWLLRYCKSARAETDVPEGLAEFILQRRRWLNGSFFAAIYSLVHFYKVWTSSHSFGRKIFLHIEFFYQLINLIVSWFSIGSYFLVFRILTTSLGDKALGFAPGKILSVIFLWLYLASIVTTFVLSFGNKPKGTEKFYVTIVIFFAILMAYMIFAAIFMAVHSIQDIYRSGTRITVSLFFQNSEFRDLVVATSSTYALYFLASFLYFEPWHMFTSFVQYILLSPSYVNVLNIYAFCNIDDISWGTKGEVGGKSLGEAKLREDGTFDVSVPISKEQINQSYLDQLEKIRDPAPPEEKVLVTNTEDYYAFIRSMTVLVWMFTNFVVIALVLETGGFNQFVEATDLANLKSNRAAVFLTVILWTVAFMALFRFIGCIYYLITRLGREIKASEHATK</sequence>
<gene>
    <name type="primary">CHS2</name>
</gene>
<keyword id="KW-0002">3D-structure</keyword>
<keyword id="KW-1003">Cell membrane</keyword>
<keyword id="KW-0961">Cell wall biogenesis/degradation</keyword>
<keyword id="KW-0328">Glycosyltransferase</keyword>
<keyword id="KW-0472">Membrane</keyword>
<keyword id="KW-0808">Transferase</keyword>
<keyword id="KW-0812">Transmembrane</keyword>
<keyword id="KW-1133">Transmembrane helix</keyword>
<organism>
    <name type="scientific">Candida albicans</name>
    <name type="common">Yeast</name>
    <dbReference type="NCBI Taxonomy" id="5476"/>
    <lineage>
        <taxon>Eukaryota</taxon>
        <taxon>Fungi</taxon>
        <taxon>Dikarya</taxon>
        <taxon>Ascomycota</taxon>
        <taxon>Saccharomycotina</taxon>
        <taxon>Pichiomycetes</taxon>
        <taxon>Debaryomycetaceae</taxon>
        <taxon>Candida/Lodderomyces clade</taxon>
        <taxon>Candida</taxon>
    </lineage>
</organism>
<protein>
    <recommendedName>
        <fullName>Chitin synthase 2</fullName>
        <ecNumber>2.4.1.16</ecNumber>
    </recommendedName>
    <alternativeName>
        <fullName>Chitin-UDP acetyl-glucosaminyl transferase 2</fullName>
    </alternativeName>
</protein>
<dbReference type="EC" id="2.4.1.16"/>
<dbReference type="EMBL" id="M82937">
    <property type="protein sequence ID" value="AAB59308.2"/>
    <property type="molecule type" value="Genomic_DNA"/>
</dbReference>
<dbReference type="PIR" id="S20538">
    <property type="entry name" value="S20538"/>
</dbReference>
<dbReference type="PDB" id="7STL">
    <property type="method" value="EM"/>
    <property type="resolution" value="2.95 A"/>
    <property type="chains" value="A/B=1-1009"/>
</dbReference>
<dbReference type="PDB" id="7STM">
    <property type="method" value="EM"/>
    <property type="resolution" value="3.02 A"/>
    <property type="chains" value="A/B=1-1009"/>
</dbReference>
<dbReference type="PDB" id="7STN">
    <property type="method" value="EM"/>
    <property type="resolution" value="3.19 A"/>
    <property type="chains" value="A/B=1-1009"/>
</dbReference>
<dbReference type="PDB" id="7STO">
    <property type="method" value="EM"/>
    <property type="resolution" value="3.15 A"/>
    <property type="chains" value="A/B=1-1009"/>
</dbReference>
<dbReference type="PDBsum" id="7STL"/>
<dbReference type="PDBsum" id="7STM"/>
<dbReference type="PDBsum" id="7STN"/>
<dbReference type="PDBsum" id="7STO"/>
<dbReference type="SMR" id="P30572"/>
<dbReference type="BindingDB" id="P30572"/>
<dbReference type="ChEMBL" id="CHEMBL1961"/>
<dbReference type="CAZy" id="GT2">
    <property type="family name" value="Glycosyltransferase Family 2"/>
</dbReference>
<dbReference type="VEuPathDB" id="FungiDB:CAWG_02178"/>
<dbReference type="VEuPathDB" id="FungiDB:CR_09020C_A"/>
<dbReference type="BRENDA" id="2.4.1.16">
    <property type="organism ID" value="1096"/>
</dbReference>
<dbReference type="PHI-base" id="PHI:7233"/>
<dbReference type="GO" id="GO:0030428">
    <property type="term" value="C:cell septum"/>
    <property type="evidence" value="ECO:0007669"/>
    <property type="project" value="TreeGrafter"/>
</dbReference>
<dbReference type="GO" id="GO:0005886">
    <property type="term" value="C:plasma membrane"/>
    <property type="evidence" value="ECO:0007669"/>
    <property type="project" value="UniProtKB-SubCell"/>
</dbReference>
<dbReference type="GO" id="GO:0004100">
    <property type="term" value="F:chitin synthase activity"/>
    <property type="evidence" value="ECO:0007669"/>
    <property type="project" value="UniProtKB-EC"/>
</dbReference>
<dbReference type="GO" id="GO:0071555">
    <property type="term" value="P:cell wall organization"/>
    <property type="evidence" value="ECO:0007669"/>
    <property type="project" value="UniProtKB-KW"/>
</dbReference>
<dbReference type="GO" id="GO:0006031">
    <property type="term" value="P:chitin biosynthetic process"/>
    <property type="evidence" value="ECO:0007669"/>
    <property type="project" value="InterPro"/>
</dbReference>
<dbReference type="CDD" id="cd04190">
    <property type="entry name" value="Chitin_synth_C"/>
    <property type="match status" value="1"/>
</dbReference>
<dbReference type="InterPro" id="IPR004835">
    <property type="entry name" value="Chitin_synth"/>
</dbReference>
<dbReference type="InterPro" id="IPR004834">
    <property type="entry name" value="Chitin_synth_fun"/>
</dbReference>
<dbReference type="InterPro" id="IPR013616">
    <property type="entry name" value="Chitin_synth_N"/>
</dbReference>
<dbReference type="InterPro" id="IPR029044">
    <property type="entry name" value="Nucleotide-diphossugar_trans"/>
</dbReference>
<dbReference type="PANTHER" id="PTHR22914">
    <property type="entry name" value="CHITIN SYNTHASE"/>
    <property type="match status" value="1"/>
</dbReference>
<dbReference type="PANTHER" id="PTHR22914:SF9">
    <property type="entry name" value="CHITIN SYNTHASE 1"/>
    <property type="match status" value="1"/>
</dbReference>
<dbReference type="Pfam" id="PF01644">
    <property type="entry name" value="Chitin_synth_1"/>
    <property type="match status" value="1"/>
</dbReference>
<dbReference type="Pfam" id="PF08407">
    <property type="entry name" value="Chitin_synth_1N"/>
    <property type="match status" value="1"/>
</dbReference>
<dbReference type="SUPFAM" id="SSF53448">
    <property type="entry name" value="Nucleotide-diphospho-sugar transferases"/>
    <property type="match status" value="1"/>
</dbReference>
<reference key="1">
    <citation type="journal article" date="1992" name="Mol. Microbiol.">
        <title>Expression of chitin synthase genes during yeast and hyphal growth phases of Candida albicans.</title>
        <authorList>
            <person name="Chen-Wu J.L.-P."/>
            <person name="Zwicker J."/>
            <person name="Bowen A.R."/>
            <person name="Robbins P.W."/>
        </authorList>
    </citation>
    <scope>NUCLEOTIDE SEQUENCE [GENOMIC DNA]</scope>
</reference>
<evidence type="ECO:0000255" key="1"/>
<evidence type="ECO:0000256" key="2">
    <source>
        <dbReference type="SAM" id="MobiDB-lite"/>
    </source>
</evidence>
<evidence type="ECO:0000305" key="3"/>
<evidence type="ECO:0007829" key="4">
    <source>
        <dbReference type="PDB" id="7STL"/>
    </source>
</evidence>
<accession>P30572</accession>
<comment type="function">
    <text evidence="3">Polymerizes chitin, a structural polymer of the cell wall and septum, by transferring the sugar moiety of UDP-GlcNAc to the non-reducing end of the growing chitin polymer.</text>
</comment>
<comment type="catalytic activity">
    <reaction>
        <text>[(1-&gt;4)-N-acetyl-beta-D-glucosaminyl](n) + UDP-N-acetyl-alpha-D-glucosamine = [(1-&gt;4)-N-acetyl-beta-D-glucosaminyl](n+1) + UDP + H(+)</text>
        <dbReference type="Rhea" id="RHEA:16637"/>
        <dbReference type="Rhea" id="RHEA-COMP:9593"/>
        <dbReference type="Rhea" id="RHEA-COMP:9595"/>
        <dbReference type="ChEBI" id="CHEBI:15378"/>
        <dbReference type="ChEBI" id="CHEBI:17029"/>
        <dbReference type="ChEBI" id="CHEBI:57705"/>
        <dbReference type="ChEBI" id="CHEBI:58223"/>
        <dbReference type="EC" id="2.4.1.16"/>
    </reaction>
</comment>
<comment type="subcellular location">
    <subcellularLocation>
        <location evidence="3">Cell membrane</location>
        <topology evidence="1">Multi-pass membrane protein</topology>
    </subcellularLocation>
</comment>
<comment type="developmental stage">
    <text>Very high levels of CHS2 in cells undergoing hyphal outgrowth.</text>
</comment>
<comment type="similarity">
    <text evidence="3">Belongs to the chitin synthase family.</text>
</comment>